<protein>
    <recommendedName>
        <fullName evidence="1">G/U mismatch-specific DNA glycosylase</fullName>
        <ecNumber evidence="1">3.2.2.28</ecNumber>
    </recommendedName>
    <alternativeName>
        <fullName evidence="1">Double-strand-specific uracil glycosylase</fullName>
    </alternativeName>
    <alternativeName>
        <fullName evidence="1">Mismatch-specific uracil DNA-glycosylase</fullName>
        <shortName evidence="1">MUG</shortName>
    </alternativeName>
</protein>
<evidence type="ECO:0000255" key="1">
    <source>
        <dbReference type="HAMAP-Rule" id="MF_01956"/>
    </source>
</evidence>
<feature type="chain" id="PRO_0000238685" description="G/U mismatch-specific DNA glycosylase">
    <location>
        <begin position="1"/>
        <end position="168"/>
    </location>
</feature>
<dbReference type="EC" id="3.2.2.28" evidence="1"/>
<dbReference type="EMBL" id="CP000036">
    <property type="protein sequence ID" value="ABB67443.1"/>
    <property type="molecule type" value="Genomic_DNA"/>
</dbReference>
<dbReference type="RefSeq" id="WP_000228937.1">
    <property type="nucleotide sequence ID" value="NC_007613.1"/>
</dbReference>
<dbReference type="SMR" id="Q31WW5"/>
<dbReference type="GeneID" id="93778924"/>
<dbReference type="KEGG" id="sbo:SBO_2927"/>
<dbReference type="HOGENOM" id="CLU_042829_3_1_6"/>
<dbReference type="Proteomes" id="UP000007067">
    <property type="component" value="Chromosome"/>
</dbReference>
<dbReference type="GO" id="GO:0005737">
    <property type="term" value="C:cytoplasm"/>
    <property type="evidence" value="ECO:0007669"/>
    <property type="project" value="UniProtKB-SubCell"/>
</dbReference>
<dbReference type="GO" id="GO:0003677">
    <property type="term" value="F:DNA binding"/>
    <property type="evidence" value="ECO:0007669"/>
    <property type="project" value="UniProtKB-KW"/>
</dbReference>
<dbReference type="GO" id="GO:0008263">
    <property type="term" value="F:pyrimidine-specific mismatch base pair DNA N-glycosylase activity"/>
    <property type="evidence" value="ECO:0007669"/>
    <property type="project" value="UniProtKB-UniRule"/>
</dbReference>
<dbReference type="GO" id="GO:0004844">
    <property type="term" value="F:uracil DNA N-glycosylase activity"/>
    <property type="evidence" value="ECO:0007669"/>
    <property type="project" value="TreeGrafter"/>
</dbReference>
<dbReference type="GO" id="GO:0006285">
    <property type="term" value="P:base-excision repair, AP site formation"/>
    <property type="evidence" value="ECO:0007669"/>
    <property type="project" value="UniProtKB-UniRule"/>
</dbReference>
<dbReference type="CDD" id="cd10028">
    <property type="entry name" value="UDG-F2_TDG_MUG"/>
    <property type="match status" value="1"/>
</dbReference>
<dbReference type="FunFam" id="3.40.470.10:FF:000003">
    <property type="entry name" value="G/U mismatch-specific DNA glycosylase"/>
    <property type="match status" value="1"/>
</dbReference>
<dbReference type="Gene3D" id="3.40.470.10">
    <property type="entry name" value="Uracil-DNA glycosylase-like domain"/>
    <property type="match status" value="1"/>
</dbReference>
<dbReference type="HAMAP" id="MF_01956">
    <property type="entry name" value="MUG"/>
    <property type="match status" value="1"/>
</dbReference>
<dbReference type="InterPro" id="IPR015637">
    <property type="entry name" value="MUG/TDG"/>
</dbReference>
<dbReference type="InterPro" id="IPR023502">
    <property type="entry name" value="MUG_bact"/>
</dbReference>
<dbReference type="InterPro" id="IPR005122">
    <property type="entry name" value="Uracil-DNA_glycosylase-like"/>
</dbReference>
<dbReference type="InterPro" id="IPR036895">
    <property type="entry name" value="Uracil-DNA_glycosylase-like_sf"/>
</dbReference>
<dbReference type="NCBIfam" id="NF007570">
    <property type="entry name" value="PRK10201.1"/>
    <property type="match status" value="1"/>
</dbReference>
<dbReference type="PANTHER" id="PTHR12159">
    <property type="entry name" value="G/T AND G/U MISMATCH-SPECIFIC DNA GLYCOSYLASE"/>
    <property type="match status" value="1"/>
</dbReference>
<dbReference type="PANTHER" id="PTHR12159:SF9">
    <property type="entry name" value="G_T MISMATCH-SPECIFIC THYMINE DNA GLYCOSYLASE"/>
    <property type="match status" value="1"/>
</dbReference>
<dbReference type="Pfam" id="PF03167">
    <property type="entry name" value="UDG"/>
    <property type="match status" value="1"/>
</dbReference>
<dbReference type="SUPFAM" id="SSF52141">
    <property type="entry name" value="Uracil-DNA glycosylase-like"/>
    <property type="match status" value="1"/>
</dbReference>
<comment type="function">
    <text evidence="1">Excises ethenocytosine and uracil, which can arise by alkylation or deamination of cytosine, respectively, from the corresponding mispairs with guanine in ds-DNA. It is capable of hydrolyzing the carbon-nitrogen bond between the sugar-phosphate backbone of the DNA and the mispaired base. The complementary strand guanine functions in substrate recognition. Required for DNA damage lesion repair in stationary-phase cells.</text>
</comment>
<comment type="catalytic activity">
    <reaction evidence="1">
        <text>Specifically hydrolyzes mismatched double-stranded DNA and polynucleotides, releasing free uracil.</text>
        <dbReference type="EC" id="3.2.2.28"/>
    </reaction>
</comment>
<comment type="subunit">
    <text evidence="1">Binds DNA as a monomer.</text>
</comment>
<comment type="subcellular location">
    <subcellularLocation>
        <location evidence="1">Cytoplasm</location>
    </subcellularLocation>
</comment>
<comment type="similarity">
    <text evidence="1">Belongs to the uracil-DNA glycosylase (UDG) superfamily. TDG/mug family.</text>
</comment>
<accession>Q31WW5</accession>
<sequence>MVEDILAPGLRVVFCGINPGLSSAGTGFPFAHPANRFWKVIYQAGFTDRQLKPQEAQHLLDYRCGVTKLVDRPTVQANEVSKQELHAGGRKLIEKIEDYQPQALAILGKQAYEQGFSQRGAQWGKQTLTIGSTQIWVLPNPSGLSRVSLEKLVEAYRELDQALVVRGR</sequence>
<keyword id="KW-0963">Cytoplasm</keyword>
<keyword id="KW-0227">DNA damage</keyword>
<keyword id="KW-0228">DNA excision</keyword>
<keyword id="KW-0234">DNA repair</keyword>
<keyword id="KW-0238">DNA-binding</keyword>
<keyword id="KW-0378">Hydrolase</keyword>
<proteinExistence type="inferred from homology"/>
<reference key="1">
    <citation type="journal article" date="2005" name="Nucleic Acids Res.">
        <title>Genome dynamics and diversity of Shigella species, the etiologic agents of bacillary dysentery.</title>
        <authorList>
            <person name="Yang F."/>
            <person name="Yang J."/>
            <person name="Zhang X."/>
            <person name="Chen L."/>
            <person name="Jiang Y."/>
            <person name="Yan Y."/>
            <person name="Tang X."/>
            <person name="Wang J."/>
            <person name="Xiong Z."/>
            <person name="Dong J."/>
            <person name="Xue Y."/>
            <person name="Zhu Y."/>
            <person name="Xu X."/>
            <person name="Sun L."/>
            <person name="Chen S."/>
            <person name="Nie H."/>
            <person name="Peng J."/>
            <person name="Xu J."/>
            <person name="Wang Y."/>
            <person name="Yuan Z."/>
            <person name="Wen Y."/>
            <person name="Yao Z."/>
            <person name="Shen Y."/>
            <person name="Qiang B."/>
            <person name="Hou Y."/>
            <person name="Yu J."/>
            <person name="Jin Q."/>
        </authorList>
    </citation>
    <scope>NUCLEOTIDE SEQUENCE [LARGE SCALE GENOMIC DNA]</scope>
    <source>
        <strain>Sb227</strain>
    </source>
</reference>
<organism>
    <name type="scientific">Shigella boydii serotype 4 (strain Sb227)</name>
    <dbReference type="NCBI Taxonomy" id="300268"/>
    <lineage>
        <taxon>Bacteria</taxon>
        <taxon>Pseudomonadati</taxon>
        <taxon>Pseudomonadota</taxon>
        <taxon>Gammaproteobacteria</taxon>
        <taxon>Enterobacterales</taxon>
        <taxon>Enterobacteriaceae</taxon>
        <taxon>Shigella</taxon>
    </lineage>
</organism>
<name>MUG_SHIBS</name>
<gene>
    <name evidence="1" type="primary">mug</name>
    <name type="ordered locus">SBO_2927</name>
</gene>